<protein>
    <recommendedName>
        <fullName evidence="1">Arginine deiminase</fullName>
        <shortName evidence="1">ADI</shortName>
        <ecNumber evidence="1">3.5.3.6</ecNumber>
    </recommendedName>
    <alternativeName>
        <fullName evidence="1">Arginine dihydrolase</fullName>
        <shortName evidence="1">AD</shortName>
    </alternativeName>
</protein>
<gene>
    <name evidence="1" type="primary">arcA</name>
    <name type="ordered locus">BAPKO_0896</name>
    <name type="ordered locus">BafPKo_0869</name>
</gene>
<sequence>MEEYLNPINIFSEIGRLKKVLLHRPGEELENLTPFIMKNFLFDDIPYLEVARQEHEVFASILKNNLVEIEYIEDLVSEVLVSSVALQNKFISQFILEAEIKTDFTINLLKDYFSSLTIDNMISKMISGVVTEELKNYTSSLDDLVNGANLFIIDPMPNVLFTRDPFASIGNGVTINKMFTKVRQRETIFAEYIFKYHPVYKENVPIWLNRWEEASLEGGDELVLNKGLLVIGISERTEAKSVEKLAISLFKNKTSFDTILAFQIPKNRSYMHLDTVFTQIDYSVFTSFTSDDMYFSIYVLTYNPSSSKIHIKKEKARIKDVLSFYLGRKIDIIKCAGGDLIHGAREQWNDGANVLAIAPGEIIAYSRNHVTNKLFEENGIKVHRIPSSELSRGRGGPRCMSMPLIREDI</sequence>
<proteinExistence type="inferred from homology"/>
<evidence type="ECO:0000255" key="1">
    <source>
        <dbReference type="HAMAP-Rule" id="MF_00242"/>
    </source>
</evidence>
<reference key="1">
    <citation type="journal article" date="2006" name="BMC Genomics">
        <title>Comparative genome analysis: selection pressure on the Borrelia vls cassettes is essential for infectivity.</title>
        <authorList>
            <person name="Gloeckner G."/>
            <person name="Schulte-Spechtel U."/>
            <person name="Schilhabel M."/>
            <person name="Felder M."/>
            <person name="Suehnel J."/>
            <person name="Wilske B."/>
            <person name="Platzer M."/>
        </authorList>
    </citation>
    <scope>NUCLEOTIDE SEQUENCE [LARGE SCALE GENOMIC DNA]</scope>
    <source>
        <strain>PKo</strain>
    </source>
</reference>
<reference key="2">
    <citation type="journal article" date="2011" name="J. Bacteriol.">
        <title>Whole-genome sequences of two Borrelia afzelii and two Borrelia garinii Lyme disease agent isolates.</title>
        <authorList>
            <person name="Casjens S.R."/>
            <person name="Mongodin E.F."/>
            <person name="Qiu W.G."/>
            <person name="Dunn J.J."/>
            <person name="Luft B.J."/>
            <person name="Fraser-Liggett C.M."/>
            <person name="Schutzer S.E."/>
        </authorList>
    </citation>
    <scope>NUCLEOTIDE SEQUENCE [LARGE SCALE GENOMIC DNA]</scope>
    <source>
        <strain>PKo</strain>
    </source>
</reference>
<name>ARCA_BORAP</name>
<comment type="catalytic activity">
    <reaction evidence="1">
        <text>L-arginine + H2O = L-citrulline + NH4(+)</text>
        <dbReference type="Rhea" id="RHEA:19597"/>
        <dbReference type="ChEBI" id="CHEBI:15377"/>
        <dbReference type="ChEBI" id="CHEBI:28938"/>
        <dbReference type="ChEBI" id="CHEBI:32682"/>
        <dbReference type="ChEBI" id="CHEBI:57743"/>
        <dbReference type="EC" id="3.5.3.6"/>
    </reaction>
</comment>
<comment type="pathway">
    <text evidence="1">Amino-acid degradation; L-arginine degradation via ADI pathway; carbamoyl phosphate from L-arginine: step 1/2.</text>
</comment>
<comment type="subcellular location">
    <subcellularLocation>
        <location evidence="1">Cytoplasm</location>
    </subcellularLocation>
</comment>
<comment type="similarity">
    <text evidence="1">Belongs to the arginine deiminase family.</text>
</comment>
<dbReference type="EC" id="3.5.3.6" evidence="1"/>
<dbReference type="EMBL" id="CP000395">
    <property type="protein sequence ID" value="ABH02120.1"/>
    <property type="molecule type" value="Genomic_DNA"/>
</dbReference>
<dbReference type="EMBL" id="CP002933">
    <property type="protein sequence ID" value="AEL70058.1"/>
    <property type="molecule type" value="Genomic_DNA"/>
</dbReference>
<dbReference type="RefSeq" id="WP_011601268.1">
    <property type="nucleotide sequence ID" value="NZ_CP160066.1"/>
</dbReference>
<dbReference type="SMR" id="Q0SM08"/>
<dbReference type="STRING" id="29518.BLA32_00015"/>
<dbReference type="GeneID" id="76832383"/>
<dbReference type="KEGG" id="baf:BAPKO_0896"/>
<dbReference type="KEGG" id="bafz:BafPKo_0869"/>
<dbReference type="PATRIC" id="fig|390236.22.peg.830"/>
<dbReference type="eggNOG" id="COG2235">
    <property type="taxonomic scope" value="Bacteria"/>
</dbReference>
<dbReference type="HOGENOM" id="CLU_052662_0_1_12"/>
<dbReference type="OrthoDB" id="9807502at2"/>
<dbReference type="UniPathway" id="UPA00254">
    <property type="reaction ID" value="UER00364"/>
</dbReference>
<dbReference type="Proteomes" id="UP000005216">
    <property type="component" value="Chromosome"/>
</dbReference>
<dbReference type="GO" id="GO:0005737">
    <property type="term" value="C:cytoplasm"/>
    <property type="evidence" value="ECO:0007669"/>
    <property type="project" value="UniProtKB-SubCell"/>
</dbReference>
<dbReference type="GO" id="GO:0016990">
    <property type="term" value="F:arginine deiminase activity"/>
    <property type="evidence" value="ECO:0007669"/>
    <property type="project" value="UniProtKB-UniRule"/>
</dbReference>
<dbReference type="GO" id="GO:0019547">
    <property type="term" value="P:arginine catabolic process to ornithine"/>
    <property type="evidence" value="ECO:0007669"/>
    <property type="project" value="UniProtKB-UniRule"/>
</dbReference>
<dbReference type="GO" id="GO:0019546">
    <property type="term" value="P:arginine deiminase pathway"/>
    <property type="evidence" value="ECO:0007669"/>
    <property type="project" value="TreeGrafter"/>
</dbReference>
<dbReference type="Gene3D" id="1.10.3930.10">
    <property type="entry name" value="Arginine deiminase"/>
    <property type="match status" value="1"/>
</dbReference>
<dbReference type="Gene3D" id="3.75.10.10">
    <property type="entry name" value="L-arginine/glycine Amidinotransferase, Chain A"/>
    <property type="match status" value="1"/>
</dbReference>
<dbReference type="HAMAP" id="MF_00242">
    <property type="entry name" value="Arg_deiminase"/>
    <property type="match status" value="1"/>
</dbReference>
<dbReference type="InterPro" id="IPR003876">
    <property type="entry name" value="Arg_deiminase"/>
</dbReference>
<dbReference type="NCBIfam" id="TIGR01078">
    <property type="entry name" value="arcA"/>
    <property type="match status" value="1"/>
</dbReference>
<dbReference type="NCBIfam" id="NF002381">
    <property type="entry name" value="PRK01388.1"/>
    <property type="match status" value="1"/>
</dbReference>
<dbReference type="PANTHER" id="PTHR47271">
    <property type="entry name" value="ARGININE DEIMINASE"/>
    <property type="match status" value="1"/>
</dbReference>
<dbReference type="PANTHER" id="PTHR47271:SF2">
    <property type="entry name" value="ARGININE DEIMINASE"/>
    <property type="match status" value="1"/>
</dbReference>
<dbReference type="Pfam" id="PF02274">
    <property type="entry name" value="ADI"/>
    <property type="match status" value="1"/>
</dbReference>
<dbReference type="PIRSF" id="PIRSF006356">
    <property type="entry name" value="Arg_deiminase"/>
    <property type="match status" value="1"/>
</dbReference>
<dbReference type="PRINTS" id="PR01466">
    <property type="entry name" value="ARGDEIMINASE"/>
</dbReference>
<dbReference type="SUPFAM" id="SSF55909">
    <property type="entry name" value="Pentein"/>
    <property type="match status" value="1"/>
</dbReference>
<feature type="chain" id="PRO_1000005713" description="Arginine deiminase">
    <location>
        <begin position="1"/>
        <end position="409"/>
    </location>
</feature>
<feature type="active site" description="Amidino-cysteine intermediate" evidence="1">
    <location>
        <position position="399"/>
    </location>
</feature>
<keyword id="KW-0056">Arginine metabolism</keyword>
<keyword id="KW-0963">Cytoplasm</keyword>
<keyword id="KW-0378">Hydrolase</keyword>
<organism>
    <name type="scientific">Borreliella afzelii (strain PKo)</name>
    <name type="common">Borrelia afzelii</name>
    <dbReference type="NCBI Taxonomy" id="390236"/>
    <lineage>
        <taxon>Bacteria</taxon>
        <taxon>Pseudomonadati</taxon>
        <taxon>Spirochaetota</taxon>
        <taxon>Spirochaetia</taxon>
        <taxon>Spirochaetales</taxon>
        <taxon>Borreliaceae</taxon>
        <taxon>Borreliella</taxon>
    </lineage>
</organism>
<accession>Q0SM08</accession>
<accession>G0IQN3</accession>